<reference key="1">
    <citation type="submission" date="2000-04" db="EMBL/GenBank/DDBJ databases">
        <title>Cloning and expression of ompU of Vibrio cholerae and its antigenicity analysis.</title>
        <authorList>
            <person name="Yin Y."/>
            <person name="Zhang J.Z."/>
        </authorList>
    </citation>
    <scope>NUCLEOTIDE SEQUENCE [GENOMIC DNA]</scope>
    <source>
        <strain>El Tor</strain>
    </source>
</reference>
<reference key="2">
    <citation type="journal article" date="2000" name="Nature">
        <title>DNA sequence of both chromosomes of the cholera pathogen Vibrio cholerae.</title>
        <authorList>
            <person name="Heidelberg J.F."/>
            <person name="Eisen J.A."/>
            <person name="Nelson W.C."/>
            <person name="Clayton R.A."/>
            <person name="Gwinn M.L."/>
            <person name="Dodson R.J."/>
            <person name="Haft D.H."/>
            <person name="Hickey E.K."/>
            <person name="Peterson J.D."/>
            <person name="Umayam L.A."/>
            <person name="Gill S.R."/>
            <person name="Nelson K.E."/>
            <person name="Read T.D."/>
            <person name="Tettelin H."/>
            <person name="Richardson D.L."/>
            <person name="Ermolaeva M.D."/>
            <person name="Vamathevan J.J."/>
            <person name="Bass S."/>
            <person name="Qin H."/>
            <person name="Dragoi I."/>
            <person name="Sellers P."/>
            <person name="McDonald L.A."/>
            <person name="Utterback T.R."/>
            <person name="Fleischmann R.D."/>
            <person name="Nierman W.C."/>
            <person name="White O."/>
            <person name="Salzberg S.L."/>
            <person name="Smith H.O."/>
            <person name="Colwell R.R."/>
            <person name="Mekalanos J.J."/>
            <person name="Venter J.C."/>
            <person name="Fraser C.M."/>
        </authorList>
    </citation>
    <scope>NUCLEOTIDE SEQUENCE [LARGE SCALE GENOMIC DNA]</scope>
    <source>
        <strain>ATCC 39315 / El Tor Inaba N16961</strain>
    </source>
</reference>
<name>OMPU_VIBCH</name>
<feature type="signal peptide" evidence="2">
    <location>
        <begin position="1"/>
        <end position="21"/>
    </location>
</feature>
<feature type="chain" id="PRO_0000025288" description="Outer membrane protein U">
    <location>
        <begin position="22"/>
        <end position="341"/>
    </location>
</feature>
<feature type="sequence conflict" description="In Ref. 1; AAF64526." evidence="3" ref="1">
    <original>F</original>
    <variation>I</variation>
    <location>
        <position position="278"/>
    </location>
</feature>
<feature type="strand" evidence="4">
    <location>
        <begin position="33"/>
        <end position="56"/>
    </location>
</feature>
<feature type="strand" evidence="4">
    <location>
        <begin position="59"/>
        <end position="62"/>
    </location>
</feature>
<feature type="strand" evidence="4">
    <location>
        <begin position="65"/>
        <end position="77"/>
    </location>
</feature>
<feature type="strand" evidence="4">
    <location>
        <begin position="80"/>
        <end position="91"/>
    </location>
</feature>
<feature type="strand" evidence="4">
    <location>
        <begin position="103"/>
        <end position="115"/>
    </location>
</feature>
<feature type="strand" evidence="4">
    <location>
        <begin position="118"/>
        <end position="126"/>
    </location>
</feature>
<feature type="helix" evidence="4">
    <location>
        <begin position="130"/>
        <end position="133"/>
    </location>
</feature>
<feature type="turn" evidence="4">
    <location>
        <begin position="134"/>
        <end position="136"/>
    </location>
</feature>
<feature type="strand" evidence="4">
    <location>
        <begin position="140"/>
        <end position="142"/>
    </location>
</feature>
<feature type="helix" evidence="4">
    <location>
        <begin position="151"/>
        <end position="153"/>
    </location>
</feature>
<feature type="strand" evidence="4">
    <location>
        <begin position="154"/>
        <end position="166"/>
    </location>
</feature>
<feature type="strand" evidence="4">
    <location>
        <begin position="169"/>
        <end position="176"/>
    </location>
</feature>
<feature type="strand" evidence="4">
    <location>
        <begin position="179"/>
        <end position="183"/>
    </location>
</feature>
<feature type="helix" evidence="4">
    <location>
        <begin position="192"/>
        <end position="194"/>
    </location>
</feature>
<feature type="strand" evidence="4">
    <location>
        <begin position="196"/>
        <end position="200"/>
    </location>
</feature>
<feature type="strand" evidence="4">
    <location>
        <begin position="205"/>
        <end position="213"/>
    </location>
</feature>
<feature type="strand" evidence="4">
    <location>
        <begin position="217"/>
        <end position="228"/>
    </location>
</feature>
<feature type="strand" evidence="4">
    <location>
        <begin position="231"/>
        <end position="242"/>
    </location>
</feature>
<feature type="strand" evidence="4">
    <location>
        <begin position="245"/>
        <end position="257"/>
    </location>
</feature>
<feature type="strand" evidence="4">
    <location>
        <begin position="260"/>
        <end position="272"/>
    </location>
</feature>
<feature type="strand" evidence="4">
    <location>
        <begin position="277"/>
        <end position="287"/>
    </location>
</feature>
<feature type="strand" evidence="4">
    <location>
        <begin position="290"/>
        <end position="305"/>
    </location>
</feature>
<feature type="strand" evidence="4">
    <location>
        <begin position="308"/>
        <end position="317"/>
    </location>
</feature>
<feature type="strand" evidence="4">
    <location>
        <begin position="321"/>
        <end position="324"/>
    </location>
</feature>
<feature type="helix" evidence="4">
    <location>
        <begin position="327"/>
        <end position="329"/>
    </location>
</feature>
<feature type="strand" evidence="4">
    <location>
        <begin position="332"/>
        <end position="340"/>
    </location>
</feature>
<dbReference type="EMBL" id="AF253529">
    <property type="protein sequence ID" value="AAF64526.1"/>
    <property type="molecule type" value="Genomic_DNA"/>
</dbReference>
<dbReference type="EMBL" id="AE003852">
    <property type="protein sequence ID" value="AAF93799.1"/>
    <property type="status" value="ALT_INIT"/>
    <property type="molecule type" value="Genomic_DNA"/>
</dbReference>
<dbReference type="PIR" id="A82299">
    <property type="entry name" value="A82299"/>
</dbReference>
<dbReference type="RefSeq" id="NP_230282.1">
    <property type="nucleotide sequence ID" value="NC_002505.1"/>
</dbReference>
<dbReference type="RefSeq" id="WP_001044323.1">
    <property type="nucleotide sequence ID" value="NZ_LT906614.1"/>
</dbReference>
<dbReference type="PDB" id="5ONU">
    <property type="method" value="X-ray"/>
    <property type="resolution" value="2.22 A"/>
    <property type="chains" value="A/B/C=1-341"/>
</dbReference>
<dbReference type="PDBsum" id="5ONU"/>
<dbReference type="SMR" id="P0C6Q6"/>
<dbReference type="STRING" id="243277.VC_0633"/>
<dbReference type="TCDB" id="1.B.1.1.15">
    <property type="family name" value="the general bacterial porin (gbp) family"/>
</dbReference>
<dbReference type="DNASU" id="2615421"/>
<dbReference type="EnsemblBacteria" id="AAF93799">
    <property type="protein sequence ID" value="AAF93799"/>
    <property type="gene ID" value="VC_0633"/>
</dbReference>
<dbReference type="KEGG" id="vch:VC_0633"/>
<dbReference type="PATRIC" id="fig|243277.26.peg.603"/>
<dbReference type="eggNOG" id="COG3203">
    <property type="taxonomic scope" value="Bacteria"/>
</dbReference>
<dbReference type="HOGENOM" id="CLU_058202_1_2_6"/>
<dbReference type="PHI-base" id="PHI:707"/>
<dbReference type="Proteomes" id="UP000000584">
    <property type="component" value="Chromosome 1"/>
</dbReference>
<dbReference type="GO" id="GO:0009279">
    <property type="term" value="C:cell outer membrane"/>
    <property type="evidence" value="ECO:0007669"/>
    <property type="project" value="UniProtKB-SubCell"/>
</dbReference>
<dbReference type="GO" id="GO:0046930">
    <property type="term" value="C:pore complex"/>
    <property type="evidence" value="ECO:0000318"/>
    <property type="project" value="GO_Central"/>
</dbReference>
<dbReference type="GO" id="GO:0015288">
    <property type="term" value="F:porin activity"/>
    <property type="evidence" value="ECO:0000318"/>
    <property type="project" value="GO_Central"/>
</dbReference>
<dbReference type="GO" id="GO:0006811">
    <property type="term" value="P:monoatomic ion transport"/>
    <property type="evidence" value="ECO:0007669"/>
    <property type="project" value="UniProtKB-KW"/>
</dbReference>
<dbReference type="CDD" id="cd00342">
    <property type="entry name" value="gram_neg_porins"/>
    <property type="match status" value="1"/>
</dbReference>
<dbReference type="Gene3D" id="2.40.160.10">
    <property type="entry name" value="Porin"/>
    <property type="match status" value="1"/>
</dbReference>
<dbReference type="InterPro" id="IPR050298">
    <property type="entry name" value="Gram-neg_bact_OMP"/>
</dbReference>
<dbReference type="InterPro" id="IPR033900">
    <property type="entry name" value="Gram_neg_porin_domain"/>
</dbReference>
<dbReference type="InterPro" id="IPR023614">
    <property type="entry name" value="Porin_dom_sf"/>
</dbReference>
<dbReference type="PANTHER" id="PTHR34501:SF2">
    <property type="entry name" value="OUTER MEMBRANE PORIN F-RELATED"/>
    <property type="match status" value="1"/>
</dbReference>
<dbReference type="PANTHER" id="PTHR34501">
    <property type="entry name" value="PROTEIN YDDL-RELATED"/>
    <property type="match status" value="1"/>
</dbReference>
<dbReference type="Pfam" id="PF13609">
    <property type="entry name" value="Porin_4"/>
    <property type="match status" value="1"/>
</dbReference>
<dbReference type="SUPFAM" id="SSF56935">
    <property type="entry name" value="Porins"/>
    <property type="match status" value="1"/>
</dbReference>
<organism>
    <name type="scientific">Vibrio cholerae serotype O1 (strain ATCC 39315 / El Tor Inaba N16961)</name>
    <dbReference type="NCBI Taxonomy" id="243277"/>
    <lineage>
        <taxon>Bacteria</taxon>
        <taxon>Pseudomonadati</taxon>
        <taxon>Pseudomonadota</taxon>
        <taxon>Gammaproteobacteria</taxon>
        <taxon>Vibrionales</taxon>
        <taxon>Vibrionaceae</taxon>
        <taxon>Vibrio</taxon>
    </lineage>
</organism>
<keyword id="KW-0002">3D-structure</keyword>
<keyword id="KW-0998">Cell outer membrane</keyword>
<keyword id="KW-0406">Ion transport</keyword>
<keyword id="KW-0472">Membrane</keyword>
<keyword id="KW-0626">Porin</keyword>
<keyword id="KW-1185">Reference proteome</keyword>
<keyword id="KW-0732">Signal</keyword>
<keyword id="KW-0812">Transmembrane</keyword>
<keyword id="KW-1134">Transmembrane beta strand</keyword>
<keyword id="KW-0813">Transport</keyword>
<sequence>MNKTLIALAVSAAAVATGAYADGINQSGDKAGSTVYSAKGTSLEVGGRAEARLSLKDGKAQDNSRVRLNFLGKAEINDSLYGVGFYEGEFTTNDQGKNASNNSLDNRYTYAGIGGTYGEVTYGKNDGALGVITDFTDIMSYHGNTAAEKIAVADRVDNMLAYKGQFGDLGVKASYRFADRNAVDAMGNVVTETNAAKYSDNGEDGYSLSAIYTFGDTGFNVGAGYADQDDQNEYMLAASYRMENLYFAGLFTDGELAKDVDYTGYELAAGYKLGQAAFTATYNNAETAKETSADNFAIDATYYFKPNFRSYISYQFNLLDSDKVGKVASEDELAIGLRYDF</sequence>
<accession>P0C6Q6</accession>
<accession>P97085</accession>
<accession>Q9KU90</accession>
<accession>Q9L5A3</accession>
<gene>
    <name type="primary">ompU</name>
    <name type="ordered locus">VC_0633</name>
</gene>
<protein>
    <recommendedName>
        <fullName>Outer membrane protein U</fullName>
    </recommendedName>
    <alternativeName>
        <fullName>Porin OmpU</fullName>
    </alternativeName>
</protein>
<comment type="function">
    <text evidence="1">Forms pores that allow passive diffusion of small molecules across the outer membrane.</text>
</comment>
<comment type="subunit">
    <text evidence="1">Homotrimer.</text>
</comment>
<comment type="subcellular location">
    <subcellularLocation>
        <location>Cell outer membrane</location>
        <topology>Multi-pass membrane protein</topology>
    </subcellularLocation>
</comment>
<comment type="similarity">
    <text evidence="3">Belongs to the Gram-negative porin family.</text>
</comment>
<comment type="sequence caution" evidence="3">
    <conflict type="erroneous initiation">
        <sequence resource="EMBL-CDS" id="AAF93799"/>
    </conflict>
</comment>
<evidence type="ECO:0000250" key="1"/>
<evidence type="ECO:0000255" key="2"/>
<evidence type="ECO:0000305" key="3"/>
<evidence type="ECO:0007829" key="4">
    <source>
        <dbReference type="PDB" id="5ONU"/>
    </source>
</evidence>
<proteinExistence type="evidence at protein level"/>